<organism evidence="3">
    <name type="scientific">Gloeospermum pauciflorum</name>
    <dbReference type="NCBI Taxonomy" id="685569"/>
    <lineage>
        <taxon>Eukaryota</taxon>
        <taxon>Viridiplantae</taxon>
        <taxon>Streptophyta</taxon>
        <taxon>Embryophyta</taxon>
        <taxon>Tracheophyta</taxon>
        <taxon>Spermatophyta</taxon>
        <taxon>Magnoliopsida</taxon>
        <taxon>eudicotyledons</taxon>
        <taxon>Gunneridae</taxon>
        <taxon>Pentapetalae</taxon>
        <taxon>rosids</taxon>
        <taxon>fabids</taxon>
        <taxon>Malpighiales</taxon>
        <taxon>Violaceae</taxon>
        <taxon>Gloeospermum</taxon>
    </lineage>
</organism>
<protein>
    <recommendedName>
        <fullName evidence="3">Cyclotide glopa A</fullName>
    </recommendedName>
</protein>
<evidence type="ECO:0000255" key="1">
    <source>
        <dbReference type="PROSITE-ProRule" id="PRU00395"/>
    </source>
</evidence>
<evidence type="ECO:0000269" key="2">
    <source>
    </source>
</evidence>
<evidence type="ECO:0000303" key="3">
    <source>
    </source>
</evidence>
<evidence type="ECO:0000305" key="4"/>
<evidence type="ECO:0000305" key="5">
    <source>
    </source>
</evidence>
<accession>C0HL35</accession>
<comment type="function">
    <text evidence="1">Probably participates in a plant defense mechanism.</text>
</comment>
<comment type="domain">
    <text evidence="4">The presence of a 'disulfide through disulfide knot' structurally defines this protein as a knottin.</text>
</comment>
<comment type="PTM">
    <text evidence="1 2">This is a cyclic peptide.</text>
</comment>
<comment type="mass spectrometry"/>
<comment type="similarity">
    <text evidence="5">Belongs to the cyclotide family. Bracelet subfamily.</text>
</comment>
<comment type="caution">
    <text evidence="4">This peptide is cyclic. The start position was chosen by similarity to Voc2 (cycloviolacin-O11) for which the DNA sequence is known.</text>
</comment>
<reference evidence="4" key="1">
    <citation type="journal article" date="2010" name="Phytochemistry">
        <title>Cyclotide proteins and precursors from the genus Gloeospermum: filling a blank spot in the cyclotide map of Violaceae.</title>
        <authorList>
            <person name="Burman R."/>
            <person name="Gruber C.W."/>
            <person name="Rizzardi K."/>
            <person name="Herrmann A."/>
            <person name="Craik D.J."/>
            <person name="Gupta M.P."/>
            <person name="Goransson U."/>
        </authorList>
    </citation>
    <scope>PROTEIN SEQUENCE</scope>
    <scope>MASS SPECTROMETRY</scope>
    <scope>IDENTIFICATION BY MASS SPECTROMETRY</scope>
    <scope>CYCLIZATION</scope>
    <scope>PRESENCE OF DISULFIDE BONDS</scope>
    <source>
        <tissue evidence="3">Leaf</tissue>
    </source>
</reference>
<name>CYGPA_GLOPU</name>
<sequence>GGSIPCIETCVWTGCFLVPGCSCKSDKKCYLN</sequence>
<dbReference type="SMR" id="C0HL35"/>
<dbReference type="GO" id="GO:0006952">
    <property type="term" value="P:defense response"/>
    <property type="evidence" value="ECO:0007669"/>
    <property type="project" value="UniProtKB-KW"/>
</dbReference>
<dbReference type="InterPro" id="IPR005535">
    <property type="entry name" value="Cyclotide"/>
</dbReference>
<dbReference type="Pfam" id="PF03784">
    <property type="entry name" value="Cyclotide"/>
    <property type="match status" value="1"/>
</dbReference>
<feature type="peptide" id="PRO_0000441838" description="Cyclotide glopa A" evidence="2">
    <location>
        <begin position="1"/>
        <end position="32"/>
    </location>
</feature>
<feature type="disulfide bond" evidence="1">
    <location>
        <begin position="6"/>
        <end position="21"/>
    </location>
</feature>
<feature type="disulfide bond" evidence="1">
    <location>
        <begin position="10"/>
        <end position="23"/>
    </location>
</feature>
<feature type="disulfide bond" evidence="1">
    <location>
        <begin position="15"/>
        <end position="29"/>
    </location>
</feature>
<feature type="cross-link" description="Cyclopeptide (Gly-Asn)" evidence="3">
    <location>
        <begin position="1"/>
        <end position="32"/>
    </location>
</feature>
<proteinExistence type="evidence at protein level"/>
<keyword id="KW-0903">Direct protein sequencing</keyword>
<keyword id="KW-1015">Disulfide bond</keyword>
<keyword id="KW-0960">Knottin</keyword>
<keyword id="KW-0611">Plant defense</keyword>